<comment type="function">
    <text evidence="1">This protein is one of the two subunits of integration host factor, a specific DNA-binding protein that functions in genetic recombination as well as in transcriptional and translational control.</text>
</comment>
<comment type="subunit">
    <text evidence="1">Heterodimer of an alpha and a beta chain.</text>
</comment>
<comment type="similarity">
    <text evidence="1">Belongs to the bacterial histone-like protein family.</text>
</comment>
<keyword id="KW-0233">DNA recombination</keyword>
<keyword id="KW-0238">DNA-binding</keyword>
<keyword id="KW-1185">Reference proteome</keyword>
<keyword id="KW-0804">Transcription</keyword>
<keyword id="KW-0805">Transcription regulation</keyword>
<keyword id="KW-0810">Translation regulation</keyword>
<dbReference type="EMBL" id="CP000868">
    <property type="protein sequence ID" value="ABX15941.1"/>
    <property type="molecule type" value="Genomic_DNA"/>
</dbReference>
<dbReference type="EMBL" id="AP009385">
    <property type="protein sequence ID" value="BAG42929.1"/>
    <property type="molecule type" value="Genomic_DNA"/>
</dbReference>
<dbReference type="RefSeq" id="WP_006400726.1">
    <property type="nucleotide sequence ID" value="NC_010804.1"/>
</dbReference>
<dbReference type="SMR" id="A9ADV3"/>
<dbReference type="STRING" id="395019.BMULJ_00983"/>
<dbReference type="KEGG" id="bmj:BMULJ_00983"/>
<dbReference type="KEGG" id="bmu:Bmul_2256"/>
<dbReference type="eggNOG" id="COG0776">
    <property type="taxonomic scope" value="Bacteria"/>
</dbReference>
<dbReference type="HOGENOM" id="CLU_105066_2_0_4"/>
<dbReference type="Proteomes" id="UP000008815">
    <property type="component" value="Chromosome 1"/>
</dbReference>
<dbReference type="GO" id="GO:0005694">
    <property type="term" value="C:chromosome"/>
    <property type="evidence" value="ECO:0007669"/>
    <property type="project" value="InterPro"/>
</dbReference>
<dbReference type="GO" id="GO:0005829">
    <property type="term" value="C:cytosol"/>
    <property type="evidence" value="ECO:0007669"/>
    <property type="project" value="TreeGrafter"/>
</dbReference>
<dbReference type="GO" id="GO:0003677">
    <property type="term" value="F:DNA binding"/>
    <property type="evidence" value="ECO:0007669"/>
    <property type="project" value="UniProtKB-UniRule"/>
</dbReference>
<dbReference type="GO" id="GO:0030527">
    <property type="term" value="F:structural constituent of chromatin"/>
    <property type="evidence" value="ECO:0007669"/>
    <property type="project" value="InterPro"/>
</dbReference>
<dbReference type="GO" id="GO:0006310">
    <property type="term" value="P:DNA recombination"/>
    <property type="evidence" value="ECO:0007669"/>
    <property type="project" value="UniProtKB-UniRule"/>
</dbReference>
<dbReference type="GO" id="GO:0006355">
    <property type="term" value="P:regulation of DNA-templated transcription"/>
    <property type="evidence" value="ECO:0007669"/>
    <property type="project" value="UniProtKB-UniRule"/>
</dbReference>
<dbReference type="GO" id="GO:0006417">
    <property type="term" value="P:regulation of translation"/>
    <property type="evidence" value="ECO:0007669"/>
    <property type="project" value="UniProtKB-UniRule"/>
</dbReference>
<dbReference type="CDD" id="cd13836">
    <property type="entry name" value="IHF_B"/>
    <property type="match status" value="1"/>
</dbReference>
<dbReference type="Gene3D" id="4.10.520.10">
    <property type="entry name" value="IHF-like DNA-binding proteins"/>
    <property type="match status" value="1"/>
</dbReference>
<dbReference type="HAMAP" id="MF_00381">
    <property type="entry name" value="IHF_beta"/>
    <property type="match status" value="1"/>
</dbReference>
<dbReference type="InterPro" id="IPR000119">
    <property type="entry name" value="Hist_DNA-bd"/>
</dbReference>
<dbReference type="InterPro" id="IPR010992">
    <property type="entry name" value="IHF-like_DNA-bd_dom_sf"/>
</dbReference>
<dbReference type="InterPro" id="IPR005685">
    <property type="entry name" value="IHF_beta"/>
</dbReference>
<dbReference type="NCBIfam" id="TIGR00988">
    <property type="entry name" value="hip"/>
    <property type="match status" value="1"/>
</dbReference>
<dbReference type="NCBIfam" id="NF001222">
    <property type="entry name" value="PRK00199.1"/>
    <property type="match status" value="1"/>
</dbReference>
<dbReference type="PANTHER" id="PTHR33175">
    <property type="entry name" value="DNA-BINDING PROTEIN HU"/>
    <property type="match status" value="1"/>
</dbReference>
<dbReference type="PANTHER" id="PTHR33175:SF5">
    <property type="entry name" value="INTEGRATION HOST FACTOR SUBUNIT BETA"/>
    <property type="match status" value="1"/>
</dbReference>
<dbReference type="Pfam" id="PF00216">
    <property type="entry name" value="Bac_DNA_binding"/>
    <property type="match status" value="1"/>
</dbReference>
<dbReference type="PRINTS" id="PR01727">
    <property type="entry name" value="DNABINDINGHU"/>
</dbReference>
<dbReference type="SMART" id="SM00411">
    <property type="entry name" value="BHL"/>
    <property type="match status" value="1"/>
</dbReference>
<dbReference type="SUPFAM" id="SSF47729">
    <property type="entry name" value="IHF-like DNA-binding proteins"/>
    <property type="match status" value="1"/>
</dbReference>
<feature type="chain" id="PRO_1000122193" description="Integration host factor subunit beta">
    <location>
        <begin position="1"/>
        <end position="107"/>
    </location>
</feature>
<feature type="region of interest" description="Disordered" evidence="2">
    <location>
        <begin position="78"/>
        <end position="107"/>
    </location>
</feature>
<feature type="compositionally biased region" description="Basic and acidic residues" evidence="2">
    <location>
        <begin position="82"/>
        <end position="101"/>
    </location>
</feature>
<proteinExistence type="inferred from homology"/>
<protein>
    <recommendedName>
        <fullName evidence="1">Integration host factor subunit beta</fullName>
        <shortName evidence="1">IHF-beta</shortName>
    </recommendedName>
</protein>
<organism>
    <name type="scientific">Burkholderia multivorans (strain ATCC 17616 / 249)</name>
    <dbReference type="NCBI Taxonomy" id="395019"/>
    <lineage>
        <taxon>Bacteria</taxon>
        <taxon>Pseudomonadati</taxon>
        <taxon>Pseudomonadota</taxon>
        <taxon>Betaproteobacteria</taxon>
        <taxon>Burkholderiales</taxon>
        <taxon>Burkholderiaceae</taxon>
        <taxon>Burkholderia</taxon>
        <taxon>Burkholderia cepacia complex</taxon>
    </lineage>
</organism>
<accession>A9ADV3</accession>
<evidence type="ECO:0000255" key="1">
    <source>
        <dbReference type="HAMAP-Rule" id="MF_00381"/>
    </source>
</evidence>
<evidence type="ECO:0000256" key="2">
    <source>
        <dbReference type="SAM" id="MobiDB-lite"/>
    </source>
</evidence>
<gene>
    <name evidence="1" type="primary">ihfB</name>
    <name evidence="1" type="synonym">himD</name>
    <name type="ordered locus">Bmul_2256</name>
    <name type="ordered locus">BMULJ_00983</name>
</gene>
<reference key="1">
    <citation type="submission" date="2007-10" db="EMBL/GenBank/DDBJ databases">
        <title>Complete sequence of chromosome 1 of Burkholderia multivorans ATCC 17616.</title>
        <authorList>
            <person name="Copeland A."/>
            <person name="Lucas S."/>
            <person name="Lapidus A."/>
            <person name="Barry K."/>
            <person name="Glavina del Rio T."/>
            <person name="Dalin E."/>
            <person name="Tice H."/>
            <person name="Pitluck S."/>
            <person name="Chain P."/>
            <person name="Malfatti S."/>
            <person name="Shin M."/>
            <person name="Vergez L."/>
            <person name="Schmutz J."/>
            <person name="Larimer F."/>
            <person name="Land M."/>
            <person name="Hauser L."/>
            <person name="Kyrpides N."/>
            <person name="Kim E."/>
            <person name="Tiedje J."/>
            <person name="Richardson P."/>
        </authorList>
    </citation>
    <scope>NUCLEOTIDE SEQUENCE [LARGE SCALE GENOMIC DNA]</scope>
    <source>
        <strain>ATCC 17616 / 249</strain>
    </source>
</reference>
<reference key="2">
    <citation type="submission" date="2007-04" db="EMBL/GenBank/DDBJ databases">
        <title>Complete genome sequence of Burkholderia multivorans ATCC 17616.</title>
        <authorList>
            <person name="Ohtsubo Y."/>
            <person name="Yamashita A."/>
            <person name="Kurokawa K."/>
            <person name="Takami H."/>
            <person name="Yuhara S."/>
            <person name="Nishiyama E."/>
            <person name="Endo R."/>
            <person name="Miyazaki R."/>
            <person name="Ono A."/>
            <person name="Yano K."/>
            <person name="Ito M."/>
            <person name="Sota M."/>
            <person name="Yuji N."/>
            <person name="Hattori M."/>
            <person name="Tsuda M."/>
        </authorList>
    </citation>
    <scope>NUCLEOTIDE SEQUENCE [LARGE SCALE GENOMIC DNA]</scope>
    <source>
        <strain>ATCC 17616 / 249</strain>
    </source>
</reference>
<name>IHFB_BURM1</name>
<sequence>MTKSELVAQLASRFPQLVLKDADFAVKTMLDAMSDALSKGHRIEIRGFGSFGLNRRPARVGRNPKSGEKVQVPEKFVPHFKPGKELRERVDGRAGEPLKADEPDDER</sequence>